<sequence length="273" mass="29555">MSQSTVDVPPKGGFSFDLCKRNDMLTQKGLKAPSFLKTGTTIVGLIFKDGVILGADTRATEGPIVADKNCEKIHYMAPNIYCCGAGTAADTEAVTDMVSSQLRLHRYQTGRDSRVITALTLLKKHLFSYQGHVSAALVLGGVDITGPHLHTIYPHGSTDTLPFATMGSGSLAAMSVFEAKYKEGLTRDEGIKLVAESICSGIFNDLGSGSNVDICVITKGNKEYLRNYMEPNPRTYVSSKGYSFTKKTEVLLTKITPLLERVEITEVGEAMEE</sequence>
<reference key="1">
    <citation type="journal article" date="1997" name="FEBS Lett.">
        <title>The 20S proteasome gene family in Arabidopsis thaliana.</title>
        <authorList>
            <person name="Parmentier Y."/>
            <person name="Bouchez D."/>
            <person name="Fleck J."/>
            <person name="Genschik P."/>
        </authorList>
    </citation>
    <scope>NUCLEOTIDE SEQUENCE [MRNA]</scope>
    <scope>NUCLEOTIDE SEQUENCE [MRNA] OF 155-273 (ISOFORM 1)</scope>
    <source>
        <strain>cv. Columbia</strain>
    </source>
</reference>
<reference key="2">
    <citation type="journal article" date="1998" name="Genetics">
        <title>Molecular organization of the 20S proteasome gene family from Arabidopsis thaliana.</title>
        <authorList>
            <person name="Fu H."/>
            <person name="Doelling J.H."/>
            <person name="Arendt C.S."/>
            <person name="Hochstrasser M."/>
            <person name="Vierstra R.D."/>
        </authorList>
    </citation>
    <scope>NUCLEOTIDE SEQUENCE [MRNA] (ISOFORM 1)</scope>
    <scope>GENE FAMILY</scope>
    <scope>NOMENCLATURE</scope>
    <source>
        <strain>cv. Columbia</strain>
    </source>
</reference>
<reference key="3">
    <citation type="journal article" date="2000" name="DNA Res.">
        <title>Structural analysis of Arabidopsis thaliana chromosome 3. I. Sequence features of the regions of 4,504,864 bp covered by sixty P1 and TAC clones.</title>
        <authorList>
            <person name="Sato S."/>
            <person name="Nakamura Y."/>
            <person name="Kaneko T."/>
            <person name="Katoh T."/>
            <person name="Asamizu E."/>
            <person name="Tabata S."/>
        </authorList>
    </citation>
    <scope>NUCLEOTIDE SEQUENCE [LARGE SCALE GENOMIC DNA]</scope>
    <source>
        <strain>cv. Columbia</strain>
    </source>
</reference>
<reference key="4">
    <citation type="journal article" date="2017" name="Plant J.">
        <title>Araport11: a complete reannotation of the Arabidopsis thaliana reference genome.</title>
        <authorList>
            <person name="Cheng C.Y."/>
            <person name="Krishnakumar V."/>
            <person name="Chan A.P."/>
            <person name="Thibaud-Nissen F."/>
            <person name="Schobel S."/>
            <person name="Town C.D."/>
        </authorList>
    </citation>
    <scope>GENOME REANNOTATION</scope>
    <source>
        <strain>cv. Columbia</strain>
    </source>
</reference>
<reference key="5">
    <citation type="journal article" date="2003" name="Science">
        <title>Empirical analysis of transcriptional activity in the Arabidopsis genome.</title>
        <authorList>
            <person name="Yamada K."/>
            <person name="Lim J."/>
            <person name="Dale J.M."/>
            <person name="Chen H."/>
            <person name="Shinn P."/>
            <person name="Palm C.J."/>
            <person name="Southwick A.M."/>
            <person name="Wu H.C."/>
            <person name="Kim C.J."/>
            <person name="Nguyen M."/>
            <person name="Pham P.K."/>
            <person name="Cheuk R.F."/>
            <person name="Karlin-Newmann G."/>
            <person name="Liu S.X."/>
            <person name="Lam B."/>
            <person name="Sakano H."/>
            <person name="Wu T."/>
            <person name="Yu G."/>
            <person name="Miranda M."/>
            <person name="Quach H.L."/>
            <person name="Tripp M."/>
            <person name="Chang C.H."/>
            <person name="Lee J.M."/>
            <person name="Toriumi M.J."/>
            <person name="Chan M.M."/>
            <person name="Tang C.C."/>
            <person name="Onodera C.S."/>
            <person name="Deng J.M."/>
            <person name="Akiyama K."/>
            <person name="Ansari Y."/>
            <person name="Arakawa T."/>
            <person name="Banh J."/>
            <person name="Banno F."/>
            <person name="Bowser L."/>
            <person name="Brooks S.Y."/>
            <person name="Carninci P."/>
            <person name="Chao Q."/>
            <person name="Choy N."/>
            <person name="Enju A."/>
            <person name="Goldsmith A.D."/>
            <person name="Gurjal M."/>
            <person name="Hansen N.F."/>
            <person name="Hayashizaki Y."/>
            <person name="Johnson-Hopson C."/>
            <person name="Hsuan V.W."/>
            <person name="Iida K."/>
            <person name="Karnes M."/>
            <person name="Khan S."/>
            <person name="Koesema E."/>
            <person name="Ishida J."/>
            <person name="Jiang P.X."/>
            <person name="Jones T."/>
            <person name="Kawai J."/>
            <person name="Kamiya A."/>
            <person name="Meyers C."/>
            <person name="Nakajima M."/>
            <person name="Narusaka M."/>
            <person name="Seki M."/>
            <person name="Sakurai T."/>
            <person name="Satou M."/>
            <person name="Tamse R."/>
            <person name="Vaysberg M."/>
            <person name="Wallender E.K."/>
            <person name="Wong C."/>
            <person name="Yamamura Y."/>
            <person name="Yuan S."/>
            <person name="Shinozaki K."/>
            <person name="Davis R.W."/>
            <person name="Theologis A."/>
            <person name="Ecker J.R."/>
        </authorList>
    </citation>
    <scope>NUCLEOTIDE SEQUENCE [LARGE SCALE MRNA] (ISOFORM 1)</scope>
    <source>
        <strain>cv. Columbia</strain>
    </source>
</reference>
<reference key="6">
    <citation type="submission" date="2002-03" db="EMBL/GenBank/DDBJ databases">
        <title>Full-length cDNA from Arabidopsis thaliana.</title>
        <authorList>
            <person name="Brover V.V."/>
            <person name="Troukhan M.E."/>
            <person name="Alexandrov N.A."/>
            <person name="Lu Y.-P."/>
            <person name="Flavell R.B."/>
            <person name="Feldmann K.A."/>
        </authorList>
    </citation>
    <scope>NUCLEOTIDE SEQUENCE [LARGE SCALE MRNA] (ISOFORM 1)</scope>
</reference>
<reference key="7">
    <citation type="journal article" date="1999" name="Mol. Biol. Rep.">
        <title>Structure and functional analyses of the 26S proteasome subunits from plants.</title>
        <authorList>
            <person name="Fu H."/>
            <person name="Girod P.-A."/>
            <person name="Doelling J.H."/>
            <person name="van Nocker S."/>
            <person name="Hochstrasser M."/>
            <person name="Finley D."/>
            <person name="Vierstra R.D."/>
        </authorList>
    </citation>
    <scope>SUBUNIT</scope>
</reference>
<reference key="8">
    <citation type="journal article" date="2010" name="J. Biol. Chem.">
        <title>Affinity purification of the Arabidopsis 26 S proteasome reveals a diverse array of plant proteolytic complexes.</title>
        <authorList>
            <person name="Book A.J."/>
            <person name="Gladman N.P."/>
            <person name="Lee S.S."/>
            <person name="Scalf M."/>
            <person name="Smith L.M."/>
            <person name="Vierstra R.D."/>
        </authorList>
    </citation>
    <scope>IDENTIFICATION BY MASS SPECTROMETRY</scope>
    <scope>CHARACTERIZATION OF THE 26S PROTEASOME COMPLEX</scope>
    <scope>SUBUNIT</scope>
</reference>
<feature type="propeptide" id="PRO_0000042830" description="Removed in mature form">
    <location>
        <begin position="1"/>
        <end position="37"/>
    </location>
</feature>
<feature type="chain" id="PRO_0000042831" description="Proteasome subunit beta type-7-A">
    <location>
        <begin position="38"/>
        <end position="273"/>
    </location>
</feature>
<feature type="active site" description="Nucleophile" evidence="2">
    <location>
        <position position="40"/>
    </location>
</feature>
<feature type="splice variant" id="VSP_018144" description="In isoform 2." evidence="6">
    <original>EVLLTKITPLLERVEITEV</original>
    <variation>GSSHQNHPIAGASRNHRSW</variation>
    <location>
        <begin position="249"/>
        <end position="267"/>
    </location>
</feature>
<feature type="splice variant" id="VSP_018145" description="In isoform 2." evidence="6">
    <location>
        <begin position="268"/>
        <end position="273"/>
    </location>
</feature>
<feature type="sequence conflict" description="In Ref. 1; CAA73621." evidence="6" ref="1">
    <original>Q</original>
    <variation>P</variation>
    <location>
        <position position="27"/>
    </location>
</feature>
<protein>
    <recommendedName>
        <fullName>Proteasome subunit beta type-7-A</fullName>
        <ecNumber>3.4.25.1</ecNumber>
    </recommendedName>
    <alternativeName>
        <fullName>20S proteasome beta subunit B-1</fullName>
    </alternativeName>
    <alternativeName>
        <fullName>Proteasome component FA</fullName>
    </alternativeName>
    <alternativeName>
        <fullName>Proteasome component FB</fullName>
    </alternativeName>
    <alternativeName>
        <fullName>Proteasome subunit beta type-2</fullName>
    </alternativeName>
</protein>
<organism>
    <name type="scientific">Arabidopsis thaliana</name>
    <name type="common">Mouse-ear cress</name>
    <dbReference type="NCBI Taxonomy" id="3702"/>
    <lineage>
        <taxon>Eukaryota</taxon>
        <taxon>Viridiplantae</taxon>
        <taxon>Streptophyta</taxon>
        <taxon>Embryophyta</taxon>
        <taxon>Tracheophyta</taxon>
        <taxon>Spermatophyta</taxon>
        <taxon>Magnoliopsida</taxon>
        <taxon>eudicotyledons</taxon>
        <taxon>Gunneridae</taxon>
        <taxon>Pentapetalae</taxon>
        <taxon>rosids</taxon>
        <taxon>malvids</taxon>
        <taxon>Brassicales</taxon>
        <taxon>Brassicaceae</taxon>
        <taxon>Camelineae</taxon>
        <taxon>Arabidopsis</taxon>
    </lineage>
</organism>
<dbReference type="EC" id="3.4.25.1"/>
<dbReference type="EMBL" id="Y13174">
    <property type="protein sequence ID" value="CAA73617.1"/>
    <property type="molecule type" value="mRNA"/>
</dbReference>
<dbReference type="EMBL" id="Y13178">
    <property type="protein sequence ID" value="CAA73621.1"/>
    <property type="molecule type" value="mRNA"/>
</dbReference>
<dbReference type="EMBL" id="AF043530">
    <property type="protein sequence ID" value="AAC32066.1"/>
    <property type="molecule type" value="mRNA"/>
</dbReference>
<dbReference type="EMBL" id="AB024028">
    <property type="protein sequence ID" value="BAA95719.1"/>
    <property type="molecule type" value="Genomic_DNA"/>
</dbReference>
<dbReference type="EMBL" id="CP002686">
    <property type="protein sequence ID" value="AEE77318.1"/>
    <property type="molecule type" value="Genomic_DNA"/>
</dbReference>
<dbReference type="EMBL" id="CP002686">
    <property type="protein sequence ID" value="AEE77319.1"/>
    <property type="molecule type" value="Genomic_DNA"/>
</dbReference>
<dbReference type="EMBL" id="BT003339">
    <property type="protein sequence ID" value="AAO29958.1"/>
    <property type="molecule type" value="mRNA"/>
</dbReference>
<dbReference type="EMBL" id="BT006306">
    <property type="protein sequence ID" value="AAP13414.1"/>
    <property type="molecule type" value="mRNA"/>
</dbReference>
<dbReference type="EMBL" id="AY086464">
    <property type="protein sequence ID" value="AAM63467.1"/>
    <property type="molecule type" value="mRNA"/>
</dbReference>
<dbReference type="PIR" id="T51977">
    <property type="entry name" value="T51977"/>
</dbReference>
<dbReference type="RefSeq" id="NP_566818.1">
    <molecule id="O23710-1"/>
    <property type="nucleotide sequence ID" value="NM_113658.3"/>
</dbReference>
<dbReference type="RefSeq" id="NP_850641.1">
    <molecule id="O23710-2"/>
    <property type="nucleotide sequence ID" value="NM_180310.1"/>
</dbReference>
<dbReference type="SMR" id="O23710"/>
<dbReference type="BioGRID" id="7694">
    <property type="interactions" value="62"/>
</dbReference>
<dbReference type="FunCoup" id="O23710">
    <property type="interactions" value="4628"/>
</dbReference>
<dbReference type="IntAct" id="O23710">
    <property type="interactions" value="2"/>
</dbReference>
<dbReference type="STRING" id="3702.O23710"/>
<dbReference type="MEROPS" id="T01.011"/>
<dbReference type="iPTMnet" id="O23710"/>
<dbReference type="PaxDb" id="3702-AT3G27430.2"/>
<dbReference type="ProteomicsDB" id="226004">
    <molecule id="O23710-1"/>
</dbReference>
<dbReference type="EnsemblPlants" id="AT3G27430.1">
    <molecule id="O23710-2"/>
    <property type="protein sequence ID" value="AT3G27430.1"/>
    <property type="gene ID" value="AT3G27430"/>
</dbReference>
<dbReference type="EnsemblPlants" id="AT3G27430.2">
    <molecule id="O23710-1"/>
    <property type="protein sequence ID" value="AT3G27430.2"/>
    <property type="gene ID" value="AT3G27430"/>
</dbReference>
<dbReference type="GeneID" id="822364"/>
<dbReference type="Gramene" id="AT3G27430.1">
    <molecule id="O23710-2"/>
    <property type="protein sequence ID" value="AT3G27430.1"/>
    <property type="gene ID" value="AT3G27430"/>
</dbReference>
<dbReference type="Gramene" id="AT3G27430.2">
    <molecule id="O23710-1"/>
    <property type="protein sequence ID" value="AT3G27430.2"/>
    <property type="gene ID" value="AT3G27430"/>
</dbReference>
<dbReference type="KEGG" id="ath:AT3G27430"/>
<dbReference type="Araport" id="AT3G27430"/>
<dbReference type="TAIR" id="AT3G27430">
    <property type="gene designation" value="PBB1"/>
</dbReference>
<dbReference type="eggNOG" id="KOG0173">
    <property type="taxonomic scope" value="Eukaryota"/>
</dbReference>
<dbReference type="InParanoid" id="O23710"/>
<dbReference type="OMA" id="MHLIYES"/>
<dbReference type="OrthoDB" id="429533at2759"/>
<dbReference type="PhylomeDB" id="O23710"/>
<dbReference type="CD-CODE" id="4299E36E">
    <property type="entry name" value="Nucleolus"/>
</dbReference>
<dbReference type="PRO" id="PR:O23710"/>
<dbReference type="Proteomes" id="UP000006548">
    <property type="component" value="Chromosome 3"/>
</dbReference>
<dbReference type="ExpressionAtlas" id="O23710">
    <property type="expression patterns" value="baseline and differential"/>
</dbReference>
<dbReference type="GO" id="GO:0005829">
    <property type="term" value="C:cytosol"/>
    <property type="evidence" value="ECO:0007005"/>
    <property type="project" value="TAIR"/>
</dbReference>
<dbReference type="GO" id="GO:0005634">
    <property type="term" value="C:nucleus"/>
    <property type="evidence" value="ECO:0007669"/>
    <property type="project" value="UniProtKB-SubCell"/>
</dbReference>
<dbReference type="GO" id="GO:0000502">
    <property type="term" value="C:proteasome complex"/>
    <property type="evidence" value="ECO:0000314"/>
    <property type="project" value="TAIR"/>
</dbReference>
<dbReference type="GO" id="GO:0019774">
    <property type="term" value="C:proteasome core complex, beta-subunit complex"/>
    <property type="evidence" value="ECO:0000250"/>
    <property type="project" value="UniProtKB"/>
</dbReference>
<dbReference type="GO" id="GO:0004298">
    <property type="term" value="F:threonine-type endopeptidase activity"/>
    <property type="evidence" value="ECO:0007669"/>
    <property type="project" value="UniProtKB-KW"/>
</dbReference>
<dbReference type="GO" id="GO:0051603">
    <property type="term" value="P:proteolysis involved in protein catabolic process"/>
    <property type="evidence" value="ECO:0007669"/>
    <property type="project" value="InterPro"/>
</dbReference>
<dbReference type="CDD" id="cd03763">
    <property type="entry name" value="proteasome_beta_type_7"/>
    <property type="match status" value="1"/>
</dbReference>
<dbReference type="FunFam" id="3.60.20.10:FF:000005">
    <property type="entry name" value="Proteasome subunit beta type-2"/>
    <property type="match status" value="1"/>
</dbReference>
<dbReference type="Gene3D" id="3.60.20.10">
    <property type="entry name" value="Glutamine Phosphoribosylpyrophosphate, subunit 1, domain 1"/>
    <property type="match status" value="1"/>
</dbReference>
<dbReference type="InterPro" id="IPR029055">
    <property type="entry name" value="Ntn_hydrolases_N"/>
</dbReference>
<dbReference type="InterPro" id="IPR000243">
    <property type="entry name" value="Pept_T1A_subB"/>
</dbReference>
<dbReference type="InterPro" id="IPR016050">
    <property type="entry name" value="Proteasome_bsu_CS"/>
</dbReference>
<dbReference type="InterPro" id="IPR001353">
    <property type="entry name" value="Proteasome_sua/b"/>
</dbReference>
<dbReference type="InterPro" id="IPR023333">
    <property type="entry name" value="Proteasome_suB-type"/>
</dbReference>
<dbReference type="PANTHER" id="PTHR32194">
    <property type="entry name" value="METALLOPROTEASE TLDD"/>
    <property type="match status" value="1"/>
</dbReference>
<dbReference type="PANTHER" id="PTHR32194:SF4">
    <property type="entry name" value="PROTEASOME SUBUNIT BETA TYPE-7"/>
    <property type="match status" value="1"/>
</dbReference>
<dbReference type="Pfam" id="PF00227">
    <property type="entry name" value="Proteasome"/>
    <property type="match status" value="1"/>
</dbReference>
<dbReference type="PRINTS" id="PR00141">
    <property type="entry name" value="PROTEASOME"/>
</dbReference>
<dbReference type="SUPFAM" id="SSF56235">
    <property type="entry name" value="N-terminal nucleophile aminohydrolases (Ntn hydrolases)"/>
    <property type="match status" value="1"/>
</dbReference>
<dbReference type="PROSITE" id="PS00854">
    <property type="entry name" value="PROTEASOME_BETA_1"/>
    <property type="match status" value="1"/>
</dbReference>
<dbReference type="PROSITE" id="PS51476">
    <property type="entry name" value="PROTEASOME_BETA_2"/>
    <property type="match status" value="1"/>
</dbReference>
<keyword id="KW-0025">Alternative splicing</keyword>
<keyword id="KW-0963">Cytoplasm</keyword>
<keyword id="KW-0378">Hydrolase</keyword>
<keyword id="KW-0539">Nucleus</keyword>
<keyword id="KW-0645">Protease</keyword>
<keyword id="KW-0647">Proteasome</keyword>
<keyword id="KW-1185">Reference proteome</keyword>
<keyword id="KW-0888">Threonine protease</keyword>
<keyword id="KW-0865">Zymogen</keyword>
<name>PSB7A_ARATH</name>
<evidence type="ECO:0000250" key="1"/>
<evidence type="ECO:0000250" key="2">
    <source>
        <dbReference type="UniProtKB" id="P25043"/>
    </source>
</evidence>
<evidence type="ECO:0000255" key="3">
    <source>
        <dbReference type="PROSITE-ProRule" id="PRU00809"/>
    </source>
</evidence>
<evidence type="ECO:0000269" key="4">
    <source>
    </source>
</evidence>
<evidence type="ECO:0000269" key="5">
    <source>
    </source>
</evidence>
<evidence type="ECO:0000305" key="6"/>
<accession>O23710</accession>
<accession>O81152</accession>
<accession>Q3EAZ2</accession>
<accession>Q9T0L7</accession>
<comment type="function">
    <text>The proteasome is a multicatalytic proteinase complex which is characterized by its ability to cleave peptides with Arg, Phe, Tyr, Leu, and Glu adjacent to the leaving group at neutral or slightly basic pH. The proteasome has an ATP-dependent proteolytic activity.</text>
</comment>
<comment type="catalytic activity">
    <reaction>
        <text>Cleavage of peptide bonds with very broad specificity.</text>
        <dbReference type="EC" id="3.4.25.1"/>
    </reaction>
</comment>
<comment type="subunit">
    <text evidence="4 5">Component of the 20S core complex of the 26S proteasome. The 26S proteasome is composed of a core protease (CP), known as the 20S proteasome, capped at one or both ends by the 19S regulatory particle (RP/PA700). The 20S proteasome core is composed of 28 subunits that are arranged in four stacked rings, resulting in a barrel-shaped structure. The two end rings are each formed by seven alpha subunits, and the two central rings are each formed by seven beta subunits. The catalytic chamber with the active sites is on the inside of the barrel.</text>
</comment>
<comment type="subcellular location">
    <subcellularLocation>
        <location evidence="3">Cytoplasm</location>
    </subcellularLocation>
    <subcellularLocation>
        <location evidence="1">Nucleus</location>
    </subcellularLocation>
</comment>
<comment type="alternative products">
    <event type="alternative splicing"/>
    <isoform>
        <id>O23710-1</id>
        <name>1</name>
        <sequence type="displayed"/>
    </isoform>
    <isoform>
        <id>O23710-2</id>
        <name>2</name>
        <sequence type="described" ref="VSP_018144 VSP_018145"/>
    </isoform>
</comment>
<comment type="miscellaneous">
    <molecule>Isoform 2</molecule>
    <text evidence="6">May be due to a competing acceptor splice site.</text>
</comment>
<comment type="similarity">
    <text evidence="3">Belongs to the peptidase T1B family.</text>
</comment>
<gene>
    <name type="primary">PBB1</name>
    <name type="synonym">PRCFA</name>
    <name type="synonym">PRCFB</name>
    <name type="ordered locus">At3g27430</name>
    <name type="ORF">K1G2.15</name>
</gene>
<proteinExistence type="evidence at protein level"/>